<name>DHNA_BACSU</name>
<accession>P42974</accession>
<gene>
    <name type="primary">ahpF</name>
    <name type="synonym">ndh</name>
    <name type="ordered locus">BSU40100</name>
</gene>
<evidence type="ECO:0000250" key="1"/>
<evidence type="ECO:0000305" key="2"/>
<organism>
    <name type="scientific">Bacillus subtilis (strain 168)</name>
    <dbReference type="NCBI Taxonomy" id="224308"/>
    <lineage>
        <taxon>Bacteria</taxon>
        <taxon>Bacillati</taxon>
        <taxon>Bacillota</taxon>
        <taxon>Bacilli</taxon>
        <taxon>Bacillales</taxon>
        <taxon>Bacillaceae</taxon>
        <taxon>Bacillus</taxon>
    </lineage>
</organism>
<feature type="chain" id="PRO_0000166789" description="NADH dehydrogenase">
    <location>
        <begin position="1"/>
        <end position="509"/>
    </location>
</feature>
<feature type="region of interest" description="Membrane-binding">
    <location>
        <begin position="1"/>
        <end position="183" status="uncertain"/>
    </location>
</feature>
<feature type="region of interest" description="Catalytic">
    <location>
        <begin position="184" status="uncertain"/>
        <end position="509"/>
    </location>
</feature>
<feature type="binding site" evidence="1">
    <location>
        <begin position="210"/>
        <end position="241"/>
    </location>
    <ligand>
        <name>FAD</name>
        <dbReference type="ChEBI" id="CHEBI:57692"/>
    </ligand>
</feature>
<feature type="binding site" evidence="1">
    <location>
        <begin position="349"/>
        <end position="379"/>
    </location>
    <ligand>
        <name>NAD(+)</name>
        <dbReference type="ChEBI" id="CHEBI:57540"/>
    </ligand>
</feature>
<feature type="binding site" evidence="1">
    <location>
        <begin position="469"/>
        <end position="479"/>
    </location>
    <ligand>
        <name>FAD</name>
        <dbReference type="ChEBI" id="CHEBI:57692"/>
    </ligand>
</feature>
<feature type="disulfide bond" description="Redox-active" evidence="1">
    <location>
        <begin position="337"/>
        <end position="340"/>
    </location>
</feature>
<feature type="sequence conflict" description="In Ref. 4; AA sequence." evidence="2" ref="4">
    <original>G</original>
    <variation>E</variation>
    <location>
        <position position="29"/>
    </location>
</feature>
<feature type="sequence conflict" description="In Ref. 3." evidence="2" ref="3">
    <original>T</original>
    <variation>D</variation>
    <location>
        <position position="227"/>
    </location>
</feature>
<feature type="sequence conflict" description="In Ref. 3." evidence="2" ref="3">
    <original>Y</original>
    <variation>I</variation>
    <location>
        <position position="393"/>
    </location>
</feature>
<proteinExistence type="evidence at protein level"/>
<comment type="function">
    <text evidence="1">Transfer of electrons from NADH to the respiratory chain. The immediate electron acceptor for the enzyme is believed to be ubiquinone (By similarity).</text>
</comment>
<comment type="catalytic activity">
    <reaction>
        <text>a ubiquinone + NADH + 5 H(+)(in) = a ubiquinol + NAD(+) + 4 H(+)(out)</text>
        <dbReference type="Rhea" id="RHEA:29091"/>
        <dbReference type="Rhea" id="RHEA-COMP:9565"/>
        <dbReference type="Rhea" id="RHEA-COMP:9566"/>
        <dbReference type="ChEBI" id="CHEBI:15378"/>
        <dbReference type="ChEBI" id="CHEBI:16389"/>
        <dbReference type="ChEBI" id="CHEBI:17976"/>
        <dbReference type="ChEBI" id="CHEBI:57540"/>
        <dbReference type="ChEBI" id="CHEBI:57945"/>
        <dbReference type="EC" id="7.1.1.2"/>
    </reaction>
</comment>
<comment type="cofactor">
    <cofactor evidence="1">
        <name>FAD</name>
        <dbReference type="ChEBI" id="CHEBI:57692"/>
    </cofactor>
    <text evidence="1">Binds 1 FAD per subunit.</text>
</comment>
<comment type="subunit">
    <text evidence="1">Homodimer.</text>
</comment>
<comment type="subcellular location">
    <subcellularLocation>
        <location evidence="1">Cell membrane</location>
        <topology evidence="1">Peripheral membrane protein</topology>
    </subcellularLocation>
</comment>
<comment type="similarity">
    <text evidence="2">Belongs to the class-II pyridine nucleotide-disulfide oxidoreductase family.</text>
</comment>
<dbReference type="EC" id="7.1.1.2"/>
<dbReference type="EMBL" id="D78193">
    <property type="protein sequence ID" value="BAA11269.1"/>
    <property type="molecule type" value="Genomic_DNA"/>
</dbReference>
<dbReference type="EMBL" id="AL009126">
    <property type="protein sequence ID" value="CAB16047.1"/>
    <property type="molecule type" value="Genomic_DNA"/>
</dbReference>
<dbReference type="EMBL" id="L19710">
    <property type="status" value="NOT_ANNOTATED_CDS"/>
    <property type="molecule type" value="Genomic_DNA"/>
</dbReference>
<dbReference type="PIR" id="G69583">
    <property type="entry name" value="G69583"/>
</dbReference>
<dbReference type="RefSeq" id="NP_391890.1">
    <property type="nucleotide sequence ID" value="NC_000964.3"/>
</dbReference>
<dbReference type="RefSeq" id="WP_003243077.1">
    <property type="nucleotide sequence ID" value="NZ_OZ025638.1"/>
</dbReference>
<dbReference type="SMR" id="P42974"/>
<dbReference type="FunCoup" id="P42974">
    <property type="interactions" value="17"/>
</dbReference>
<dbReference type="IntAct" id="P42974">
    <property type="interactions" value="1"/>
</dbReference>
<dbReference type="MINT" id="P42974"/>
<dbReference type="STRING" id="224308.BSU40100"/>
<dbReference type="jPOST" id="P42974"/>
<dbReference type="PaxDb" id="224308-BSU40100"/>
<dbReference type="EnsemblBacteria" id="CAB16047">
    <property type="protein sequence ID" value="CAB16047"/>
    <property type="gene ID" value="BSU_40100"/>
</dbReference>
<dbReference type="GeneID" id="937717"/>
<dbReference type="KEGG" id="bsu:BSU40100"/>
<dbReference type="PATRIC" id="fig|224308.179.peg.4337"/>
<dbReference type="eggNOG" id="COG3634">
    <property type="taxonomic scope" value="Bacteria"/>
</dbReference>
<dbReference type="InParanoid" id="P42974"/>
<dbReference type="OrthoDB" id="9806179at2"/>
<dbReference type="PhylomeDB" id="P42974"/>
<dbReference type="BioCyc" id="BSUB:BSU40100-MONOMER"/>
<dbReference type="Proteomes" id="UP000001570">
    <property type="component" value="Chromosome"/>
</dbReference>
<dbReference type="GO" id="GO:0005829">
    <property type="term" value="C:cytosol"/>
    <property type="evidence" value="ECO:0000318"/>
    <property type="project" value="GO_Central"/>
</dbReference>
<dbReference type="GO" id="GO:0005886">
    <property type="term" value="C:plasma membrane"/>
    <property type="evidence" value="ECO:0007669"/>
    <property type="project" value="UniProtKB-SubCell"/>
</dbReference>
<dbReference type="GO" id="GO:0050660">
    <property type="term" value="F:flavin adenine dinucleotide binding"/>
    <property type="evidence" value="ECO:0007669"/>
    <property type="project" value="InterPro"/>
</dbReference>
<dbReference type="GO" id="GO:0051287">
    <property type="term" value="F:NAD binding"/>
    <property type="evidence" value="ECO:0007669"/>
    <property type="project" value="InterPro"/>
</dbReference>
<dbReference type="GO" id="GO:0008137">
    <property type="term" value="F:NADH dehydrogenase (ubiquinone) activity"/>
    <property type="evidence" value="ECO:0007669"/>
    <property type="project" value="UniProtKB-EC"/>
</dbReference>
<dbReference type="GO" id="GO:0102039">
    <property type="term" value="F:NADH-dependent peroxiredoxin activity"/>
    <property type="evidence" value="ECO:0007669"/>
    <property type="project" value="InterPro"/>
</dbReference>
<dbReference type="GO" id="GO:0004791">
    <property type="term" value="F:thioredoxin-disulfide reductase (NADPH) activity"/>
    <property type="evidence" value="ECO:0000318"/>
    <property type="project" value="GO_Central"/>
</dbReference>
<dbReference type="GO" id="GO:0045454">
    <property type="term" value="P:cell redox homeostasis"/>
    <property type="evidence" value="ECO:0000318"/>
    <property type="project" value="GO_Central"/>
</dbReference>
<dbReference type="GO" id="GO:0000302">
    <property type="term" value="P:response to reactive oxygen species"/>
    <property type="evidence" value="ECO:0007669"/>
    <property type="project" value="InterPro"/>
</dbReference>
<dbReference type="CDD" id="cd03026">
    <property type="entry name" value="AhpF_NTD_C"/>
    <property type="match status" value="1"/>
</dbReference>
<dbReference type="CDD" id="cd02974">
    <property type="entry name" value="AhpF_NTD_N"/>
    <property type="match status" value="1"/>
</dbReference>
<dbReference type="FunFam" id="3.50.50.60:FF:000007">
    <property type="entry name" value="Alkyl hydroperoxide reductase, F subunit"/>
    <property type="match status" value="1"/>
</dbReference>
<dbReference type="Gene3D" id="3.40.30.80">
    <property type="match status" value="1"/>
</dbReference>
<dbReference type="Gene3D" id="3.50.50.60">
    <property type="entry name" value="FAD/NAD(P)-binding domain"/>
    <property type="match status" value="2"/>
</dbReference>
<dbReference type="InterPro" id="IPR044141">
    <property type="entry name" value="AhpF_NTD_C"/>
</dbReference>
<dbReference type="InterPro" id="IPR044142">
    <property type="entry name" value="AhpF_NTD_N"/>
</dbReference>
<dbReference type="InterPro" id="IPR012081">
    <property type="entry name" value="Alkyl_hydroperoxide_Rdtase_suF"/>
</dbReference>
<dbReference type="InterPro" id="IPR036188">
    <property type="entry name" value="FAD/NAD-bd_sf"/>
</dbReference>
<dbReference type="InterPro" id="IPR023753">
    <property type="entry name" value="FAD/NAD-binding_dom"/>
</dbReference>
<dbReference type="InterPro" id="IPR050097">
    <property type="entry name" value="Ferredoxin-NADP_redctase_2"/>
</dbReference>
<dbReference type="InterPro" id="IPR008255">
    <property type="entry name" value="Pyr_nucl-diS_OxRdtase_2_AS"/>
</dbReference>
<dbReference type="InterPro" id="IPR012336">
    <property type="entry name" value="Thioredoxin-like_fold"/>
</dbReference>
<dbReference type="InterPro" id="IPR036249">
    <property type="entry name" value="Thioredoxin-like_sf"/>
</dbReference>
<dbReference type="NCBIfam" id="TIGR03140">
    <property type="entry name" value="AhpF"/>
    <property type="match status" value="1"/>
</dbReference>
<dbReference type="PANTHER" id="PTHR48105">
    <property type="entry name" value="THIOREDOXIN REDUCTASE 1-RELATED-RELATED"/>
    <property type="match status" value="1"/>
</dbReference>
<dbReference type="Pfam" id="PF07992">
    <property type="entry name" value="Pyr_redox_2"/>
    <property type="match status" value="1"/>
</dbReference>
<dbReference type="Pfam" id="PF13192">
    <property type="entry name" value="Thioredoxin_3"/>
    <property type="match status" value="1"/>
</dbReference>
<dbReference type="PIRSF" id="PIRSF000238">
    <property type="entry name" value="AhpF"/>
    <property type="match status" value="1"/>
</dbReference>
<dbReference type="PRINTS" id="PR00368">
    <property type="entry name" value="FADPNR"/>
</dbReference>
<dbReference type="PRINTS" id="PR00469">
    <property type="entry name" value="PNDRDTASEII"/>
</dbReference>
<dbReference type="SUPFAM" id="SSF51905">
    <property type="entry name" value="FAD/NAD(P)-binding domain"/>
    <property type="match status" value="1"/>
</dbReference>
<dbReference type="SUPFAM" id="SSF52833">
    <property type="entry name" value="Thioredoxin-like"/>
    <property type="match status" value="2"/>
</dbReference>
<dbReference type="PROSITE" id="PS51354">
    <property type="entry name" value="GLUTAREDOXIN_2"/>
    <property type="match status" value="1"/>
</dbReference>
<dbReference type="PROSITE" id="PS00573">
    <property type="entry name" value="PYRIDINE_REDOX_2"/>
    <property type="match status" value="1"/>
</dbReference>
<keyword id="KW-1003">Cell membrane</keyword>
<keyword id="KW-0903">Direct protein sequencing</keyword>
<keyword id="KW-1015">Disulfide bond</keyword>
<keyword id="KW-0249">Electron transport</keyword>
<keyword id="KW-0274">FAD</keyword>
<keyword id="KW-0285">Flavoprotein</keyword>
<keyword id="KW-0472">Membrane</keyword>
<keyword id="KW-0520">NAD</keyword>
<keyword id="KW-0560">Oxidoreductase</keyword>
<keyword id="KW-0676">Redox-active center</keyword>
<keyword id="KW-1185">Reference proteome</keyword>
<keyword id="KW-1278">Translocase</keyword>
<keyword id="KW-0813">Transport</keyword>
<keyword id="KW-0830">Ubiquinone</keyword>
<protein>
    <recommendedName>
        <fullName>NADH dehydrogenase</fullName>
        <ecNumber>7.1.1.2</ecNumber>
    </recommendedName>
    <alternativeName>
        <fullName>Alkyl hydroperoxide reductase</fullName>
    </alternativeName>
</protein>
<sequence length="509" mass="54874">MVLDANIKAQLNQYMQLIENDIVLKVSAGEDDTSKDMLALVDELASMSSKISVEKAELNRTPSFSVNRVGEDTGVTFAGIPLGHEFTSLVLALLQVSGRPPKVDQKVIDQVKKISGEYHFESYISLTCHNCPDVVQALNMMSVLNPNITHTMIDGAAYKAEVESKNIMAVPTVYLNGESFGSGRMTLEEILAKMGSGTDASEFADKEPFDVLVVGGGPAGASAAIYTARKGIRTGVVAERFGGQVLDTMSIENFISVKATEGPKLAASLEEHVKEYDIDVMNLQRAKRLEKKDLFELELENGAVLKSKTVILSTGARWRNVNVPGEQEFKNKGVAYCPHCDGPLFEGKDVAVIGGGNSGIEAAIDLAGIVNHVTVLEFAPELKADEVLQKRLYSLPNVTVVKNAQTKEITGDQSVNGITYVDRETGEEKHVELQGVFVQIGLVPNTEWLEGTVERNRMGEIIVDKHGATSVPGLFAAGDCTDSAYNQIIISMGSGATAALGAFDYLIRN</sequence>
<reference key="1">
    <citation type="journal article" date="1997" name="DNA Res.">
        <title>Sequence analysis of the 36-kb region between gntZ and trnY genes of Bacillus subtilis genome.</title>
        <authorList>
            <person name="Kasahara Y."/>
            <person name="Nakai S."/>
            <person name="Ogasawara N."/>
        </authorList>
    </citation>
    <scope>NUCLEOTIDE SEQUENCE [GENOMIC DNA]</scope>
    <source>
        <strain>168</strain>
    </source>
</reference>
<reference key="2">
    <citation type="journal article" date="1997" name="Nature">
        <title>The complete genome sequence of the Gram-positive bacterium Bacillus subtilis.</title>
        <authorList>
            <person name="Kunst F."/>
            <person name="Ogasawara N."/>
            <person name="Moszer I."/>
            <person name="Albertini A.M."/>
            <person name="Alloni G."/>
            <person name="Azevedo V."/>
            <person name="Bertero M.G."/>
            <person name="Bessieres P."/>
            <person name="Bolotin A."/>
            <person name="Borchert S."/>
            <person name="Borriss R."/>
            <person name="Boursier L."/>
            <person name="Brans A."/>
            <person name="Braun M."/>
            <person name="Brignell S.C."/>
            <person name="Bron S."/>
            <person name="Brouillet S."/>
            <person name="Bruschi C.V."/>
            <person name="Caldwell B."/>
            <person name="Capuano V."/>
            <person name="Carter N.M."/>
            <person name="Choi S.-K."/>
            <person name="Codani J.-J."/>
            <person name="Connerton I.F."/>
            <person name="Cummings N.J."/>
            <person name="Daniel R.A."/>
            <person name="Denizot F."/>
            <person name="Devine K.M."/>
            <person name="Duesterhoeft A."/>
            <person name="Ehrlich S.D."/>
            <person name="Emmerson P.T."/>
            <person name="Entian K.-D."/>
            <person name="Errington J."/>
            <person name="Fabret C."/>
            <person name="Ferrari E."/>
            <person name="Foulger D."/>
            <person name="Fritz C."/>
            <person name="Fujita M."/>
            <person name="Fujita Y."/>
            <person name="Fuma S."/>
            <person name="Galizzi A."/>
            <person name="Galleron N."/>
            <person name="Ghim S.-Y."/>
            <person name="Glaser P."/>
            <person name="Goffeau A."/>
            <person name="Golightly E.J."/>
            <person name="Grandi G."/>
            <person name="Guiseppi G."/>
            <person name="Guy B.J."/>
            <person name="Haga K."/>
            <person name="Haiech J."/>
            <person name="Harwood C.R."/>
            <person name="Henaut A."/>
            <person name="Hilbert H."/>
            <person name="Holsappel S."/>
            <person name="Hosono S."/>
            <person name="Hullo M.-F."/>
            <person name="Itaya M."/>
            <person name="Jones L.-M."/>
            <person name="Joris B."/>
            <person name="Karamata D."/>
            <person name="Kasahara Y."/>
            <person name="Klaerr-Blanchard M."/>
            <person name="Klein C."/>
            <person name="Kobayashi Y."/>
            <person name="Koetter P."/>
            <person name="Koningstein G."/>
            <person name="Krogh S."/>
            <person name="Kumano M."/>
            <person name="Kurita K."/>
            <person name="Lapidus A."/>
            <person name="Lardinois S."/>
            <person name="Lauber J."/>
            <person name="Lazarevic V."/>
            <person name="Lee S.-M."/>
            <person name="Levine A."/>
            <person name="Liu H."/>
            <person name="Masuda S."/>
            <person name="Mauel C."/>
            <person name="Medigue C."/>
            <person name="Medina N."/>
            <person name="Mellado R.P."/>
            <person name="Mizuno M."/>
            <person name="Moestl D."/>
            <person name="Nakai S."/>
            <person name="Noback M."/>
            <person name="Noone D."/>
            <person name="O'Reilly M."/>
            <person name="Ogawa K."/>
            <person name="Ogiwara A."/>
            <person name="Oudega B."/>
            <person name="Park S.-H."/>
            <person name="Parro V."/>
            <person name="Pohl T.M."/>
            <person name="Portetelle D."/>
            <person name="Porwollik S."/>
            <person name="Prescott A.M."/>
            <person name="Presecan E."/>
            <person name="Pujic P."/>
            <person name="Purnelle B."/>
            <person name="Rapoport G."/>
            <person name="Rey M."/>
            <person name="Reynolds S."/>
            <person name="Rieger M."/>
            <person name="Rivolta C."/>
            <person name="Rocha E."/>
            <person name="Roche B."/>
            <person name="Rose M."/>
            <person name="Sadaie Y."/>
            <person name="Sato T."/>
            <person name="Scanlan E."/>
            <person name="Schleich S."/>
            <person name="Schroeter R."/>
            <person name="Scoffone F."/>
            <person name="Sekiguchi J."/>
            <person name="Sekowska A."/>
            <person name="Seror S.J."/>
            <person name="Serror P."/>
            <person name="Shin B.-S."/>
            <person name="Soldo B."/>
            <person name="Sorokin A."/>
            <person name="Tacconi E."/>
            <person name="Takagi T."/>
            <person name="Takahashi H."/>
            <person name="Takemaru K."/>
            <person name="Takeuchi M."/>
            <person name="Tamakoshi A."/>
            <person name="Tanaka T."/>
            <person name="Terpstra P."/>
            <person name="Tognoni A."/>
            <person name="Tosato V."/>
            <person name="Uchiyama S."/>
            <person name="Vandenbol M."/>
            <person name="Vannier F."/>
            <person name="Vassarotti A."/>
            <person name="Viari A."/>
            <person name="Wambutt R."/>
            <person name="Wedler E."/>
            <person name="Wedler H."/>
            <person name="Weitzenegger T."/>
            <person name="Winters P."/>
            <person name="Wipat A."/>
            <person name="Yamamoto H."/>
            <person name="Yamane K."/>
            <person name="Yasumoto K."/>
            <person name="Yata K."/>
            <person name="Yoshida K."/>
            <person name="Yoshikawa H.-F."/>
            <person name="Zumstein E."/>
            <person name="Yoshikawa H."/>
            <person name="Danchin A."/>
        </authorList>
    </citation>
    <scope>NUCLEOTIDE SEQUENCE [LARGE SCALE GENOMIC DNA]</scope>
    <source>
        <strain>168</strain>
    </source>
</reference>
<reference key="3">
    <citation type="journal article" date="1994" name="Gene">
        <title>A Bacillus subtilis bglA gene encoding phospho-beta-glucosidase is inducible and closely linked to a NADH dehydrogenase-encoding gene.</title>
        <authorList>
            <person name="Zhang J."/>
            <person name="Aronson A.I."/>
        </authorList>
    </citation>
    <scope>NUCLEOTIDE SEQUENCE [GENOMIC DNA] OF 137-509</scope>
    <source>
        <strain>168 / JH642</strain>
    </source>
</reference>
<reference key="4">
    <citation type="journal article" date="1994" name="Microbiology">
        <title>Isolation and characterization of a hydrogen peroxide resistant mutant of Bacillus subtilis.</title>
        <authorList>
            <person name="Hartford O.M."/>
            <person name="Dowds B.C.A."/>
        </authorList>
    </citation>
    <scope>PROTEIN SEQUENCE OF 1-29</scope>
    <source>
        <strain>168 / YB886 / BG214</strain>
    </source>
</reference>